<reference key="1">
    <citation type="journal article" date="2009" name="PLoS Genet.">
        <title>The complete genome and proteome of Laribacter hongkongensis reveal potential mechanisms for adaptations to different temperatures and habitats.</title>
        <authorList>
            <person name="Woo P.C.Y."/>
            <person name="Lau S.K.P."/>
            <person name="Tse H."/>
            <person name="Teng J.L.L."/>
            <person name="Curreem S.O."/>
            <person name="Tsang A.K.L."/>
            <person name="Fan R.Y.Y."/>
            <person name="Wong G.K.M."/>
            <person name="Huang Y."/>
            <person name="Loman N.J."/>
            <person name="Snyder L.A.S."/>
            <person name="Cai J.J."/>
            <person name="Huang J.-D."/>
            <person name="Mak W."/>
            <person name="Pallen M.J."/>
            <person name="Lok S."/>
            <person name="Yuen K.-Y."/>
        </authorList>
    </citation>
    <scope>NUCLEOTIDE SEQUENCE [LARGE SCALE GENOMIC DNA]</scope>
    <source>
        <strain>HLHK9</strain>
    </source>
</reference>
<protein>
    <recommendedName>
        <fullName evidence="1">Pyrimidine/purine nucleoside phosphorylase</fullName>
        <ecNumber evidence="1">2.4.2.1</ecNumber>
        <ecNumber evidence="1">2.4.2.2</ecNumber>
    </recommendedName>
    <alternativeName>
        <fullName evidence="1">Adenosine phosphorylase</fullName>
    </alternativeName>
    <alternativeName>
        <fullName evidence="1">Cytidine phosphorylase</fullName>
    </alternativeName>
    <alternativeName>
        <fullName evidence="1">Guanosine phosphorylase</fullName>
    </alternativeName>
    <alternativeName>
        <fullName evidence="1">Inosine phosphorylase</fullName>
    </alternativeName>
    <alternativeName>
        <fullName evidence="1">Thymidine phosphorylase</fullName>
    </alternativeName>
    <alternativeName>
        <fullName evidence="1">Uridine phosphorylase</fullName>
    </alternativeName>
    <alternativeName>
        <fullName evidence="1">Xanthosine phosphorylase</fullName>
    </alternativeName>
</protein>
<proteinExistence type="inferred from homology"/>
<comment type="function">
    <text evidence="1">Catalyzes the phosphorolysis of diverse nucleosides, yielding D-ribose 1-phosphate and the respective free bases. Can use uridine, adenosine, guanosine, cytidine, thymidine, inosine and xanthosine as substrates. Also catalyzes the reverse reactions.</text>
</comment>
<comment type="catalytic activity">
    <reaction evidence="1">
        <text>a purine D-ribonucleoside + phosphate = a purine nucleobase + alpha-D-ribose 1-phosphate</text>
        <dbReference type="Rhea" id="RHEA:19805"/>
        <dbReference type="ChEBI" id="CHEBI:26386"/>
        <dbReference type="ChEBI" id="CHEBI:43474"/>
        <dbReference type="ChEBI" id="CHEBI:57720"/>
        <dbReference type="ChEBI" id="CHEBI:142355"/>
        <dbReference type="EC" id="2.4.2.1"/>
    </reaction>
</comment>
<comment type="catalytic activity">
    <reaction evidence="1">
        <text>adenosine + phosphate = alpha-D-ribose 1-phosphate + adenine</text>
        <dbReference type="Rhea" id="RHEA:27642"/>
        <dbReference type="ChEBI" id="CHEBI:16335"/>
        <dbReference type="ChEBI" id="CHEBI:16708"/>
        <dbReference type="ChEBI" id="CHEBI:43474"/>
        <dbReference type="ChEBI" id="CHEBI:57720"/>
        <dbReference type="EC" id="2.4.2.1"/>
    </reaction>
</comment>
<comment type="catalytic activity">
    <reaction evidence="1">
        <text>cytidine + phosphate = cytosine + alpha-D-ribose 1-phosphate</text>
        <dbReference type="Rhea" id="RHEA:52540"/>
        <dbReference type="ChEBI" id="CHEBI:16040"/>
        <dbReference type="ChEBI" id="CHEBI:17562"/>
        <dbReference type="ChEBI" id="CHEBI:43474"/>
        <dbReference type="ChEBI" id="CHEBI:57720"/>
        <dbReference type="EC" id="2.4.2.2"/>
    </reaction>
</comment>
<comment type="catalytic activity">
    <reaction evidence="1">
        <text>guanosine + phosphate = alpha-D-ribose 1-phosphate + guanine</text>
        <dbReference type="Rhea" id="RHEA:13233"/>
        <dbReference type="ChEBI" id="CHEBI:16235"/>
        <dbReference type="ChEBI" id="CHEBI:16750"/>
        <dbReference type="ChEBI" id="CHEBI:43474"/>
        <dbReference type="ChEBI" id="CHEBI:57720"/>
        <dbReference type="EC" id="2.4.2.1"/>
    </reaction>
</comment>
<comment type="catalytic activity">
    <reaction evidence="1">
        <text>inosine + phosphate = alpha-D-ribose 1-phosphate + hypoxanthine</text>
        <dbReference type="Rhea" id="RHEA:27646"/>
        <dbReference type="ChEBI" id="CHEBI:17368"/>
        <dbReference type="ChEBI" id="CHEBI:17596"/>
        <dbReference type="ChEBI" id="CHEBI:43474"/>
        <dbReference type="ChEBI" id="CHEBI:57720"/>
        <dbReference type="EC" id="2.4.2.1"/>
    </reaction>
</comment>
<comment type="catalytic activity">
    <reaction evidence="1">
        <text>thymidine + phosphate = 2-deoxy-alpha-D-ribose 1-phosphate + thymine</text>
        <dbReference type="Rhea" id="RHEA:16037"/>
        <dbReference type="ChEBI" id="CHEBI:17748"/>
        <dbReference type="ChEBI" id="CHEBI:17821"/>
        <dbReference type="ChEBI" id="CHEBI:43474"/>
        <dbReference type="ChEBI" id="CHEBI:57259"/>
        <dbReference type="EC" id="2.4.2.2"/>
    </reaction>
</comment>
<comment type="catalytic activity">
    <reaction evidence="1">
        <text>uridine + phosphate = alpha-D-ribose 1-phosphate + uracil</text>
        <dbReference type="Rhea" id="RHEA:24388"/>
        <dbReference type="ChEBI" id="CHEBI:16704"/>
        <dbReference type="ChEBI" id="CHEBI:17568"/>
        <dbReference type="ChEBI" id="CHEBI:43474"/>
        <dbReference type="ChEBI" id="CHEBI:57720"/>
        <dbReference type="EC" id="2.4.2.2"/>
    </reaction>
</comment>
<comment type="catalytic activity">
    <reaction evidence="1">
        <text>xanthosine + phosphate = alpha-D-ribose 1-phosphate + xanthine</text>
        <dbReference type="Rhea" id="RHEA:27638"/>
        <dbReference type="ChEBI" id="CHEBI:17712"/>
        <dbReference type="ChEBI" id="CHEBI:18107"/>
        <dbReference type="ChEBI" id="CHEBI:43474"/>
        <dbReference type="ChEBI" id="CHEBI:57720"/>
        <dbReference type="EC" id="2.4.2.1"/>
    </reaction>
</comment>
<comment type="similarity">
    <text evidence="1">Belongs to the nucleoside phosphorylase PpnP family.</text>
</comment>
<name>PPNP_LARHH</name>
<sequence length="103" mass="11130">MTHFENASIQKTANVYFDGKCISHNLTLPDGSRKSVGVILPATLEFNTGAPEIMEVLAGQCRVTLADAPASQTYEAGQSFNVPGNSHFTIEVTDTLHYVCHFG</sequence>
<keyword id="KW-0328">Glycosyltransferase</keyword>
<keyword id="KW-1185">Reference proteome</keyword>
<keyword id="KW-0808">Transferase</keyword>
<evidence type="ECO:0000255" key="1">
    <source>
        <dbReference type="HAMAP-Rule" id="MF_01537"/>
    </source>
</evidence>
<dbReference type="EC" id="2.4.2.1" evidence="1"/>
<dbReference type="EC" id="2.4.2.2" evidence="1"/>
<dbReference type="EMBL" id="CP001154">
    <property type="protein sequence ID" value="ACO74586.1"/>
    <property type="molecule type" value="Genomic_DNA"/>
</dbReference>
<dbReference type="RefSeq" id="WP_012697072.1">
    <property type="nucleotide sequence ID" value="NC_012559.1"/>
</dbReference>
<dbReference type="SMR" id="C1D7Z6"/>
<dbReference type="STRING" id="557598.LHK_01600"/>
<dbReference type="KEGG" id="lhk:LHK_01600"/>
<dbReference type="eggNOG" id="COG3123">
    <property type="taxonomic scope" value="Bacteria"/>
</dbReference>
<dbReference type="HOGENOM" id="CLU_157874_1_0_4"/>
<dbReference type="Proteomes" id="UP000002010">
    <property type="component" value="Chromosome"/>
</dbReference>
<dbReference type="GO" id="GO:0005829">
    <property type="term" value="C:cytosol"/>
    <property type="evidence" value="ECO:0007669"/>
    <property type="project" value="TreeGrafter"/>
</dbReference>
<dbReference type="GO" id="GO:0047975">
    <property type="term" value="F:guanosine phosphorylase activity"/>
    <property type="evidence" value="ECO:0007669"/>
    <property type="project" value="UniProtKB-EC"/>
</dbReference>
<dbReference type="GO" id="GO:0004731">
    <property type="term" value="F:purine-nucleoside phosphorylase activity"/>
    <property type="evidence" value="ECO:0007669"/>
    <property type="project" value="UniProtKB-UniRule"/>
</dbReference>
<dbReference type="GO" id="GO:0009032">
    <property type="term" value="F:thymidine phosphorylase activity"/>
    <property type="evidence" value="ECO:0007669"/>
    <property type="project" value="UniProtKB-EC"/>
</dbReference>
<dbReference type="GO" id="GO:0004850">
    <property type="term" value="F:uridine phosphorylase activity"/>
    <property type="evidence" value="ECO:0007669"/>
    <property type="project" value="UniProtKB-EC"/>
</dbReference>
<dbReference type="CDD" id="cd20296">
    <property type="entry name" value="cupin_PpnP-like"/>
    <property type="match status" value="1"/>
</dbReference>
<dbReference type="Gene3D" id="2.60.120.10">
    <property type="entry name" value="Jelly Rolls"/>
    <property type="match status" value="1"/>
</dbReference>
<dbReference type="HAMAP" id="MF_01537">
    <property type="entry name" value="Nucleos_phosphorylase_PpnP"/>
    <property type="match status" value="1"/>
</dbReference>
<dbReference type="InterPro" id="IPR009664">
    <property type="entry name" value="Ppnp"/>
</dbReference>
<dbReference type="InterPro" id="IPR014710">
    <property type="entry name" value="RmlC-like_jellyroll"/>
</dbReference>
<dbReference type="InterPro" id="IPR011051">
    <property type="entry name" value="RmlC_Cupin_sf"/>
</dbReference>
<dbReference type="PANTHER" id="PTHR36540">
    <property type="entry name" value="PYRIMIDINE/PURINE NUCLEOSIDE PHOSPHORYLASE"/>
    <property type="match status" value="1"/>
</dbReference>
<dbReference type="PANTHER" id="PTHR36540:SF1">
    <property type="entry name" value="PYRIMIDINE_PURINE NUCLEOSIDE PHOSPHORYLASE"/>
    <property type="match status" value="1"/>
</dbReference>
<dbReference type="Pfam" id="PF06865">
    <property type="entry name" value="Ppnp"/>
    <property type="match status" value="1"/>
</dbReference>
<dbReference type="SUPFAM" id="SSF51182">
    <property type="entry name" value="RmlC-like cupins"/>
    <property type="match status" value="1"/>
</dbReference>
<accession>C1D7Z6</accession>
<feature type="chain" id="PRO_1000185197" description="Pyrimidine/purine nucleoside phosphorylase">
    <location>
        <begin position="1"/>
        <end position="103"/>
    </location>
</feature>
<gene>
    <name evidence="1" type="primary">ppnP</name>
    <name type="ordered locus">LHK_01600</name>
</gene>
<organism>
    <name type="scientific">Laribacter hongkongensis (strain HLHK9)</name>
    <dbReference type="NCBI Taxonomy" id="557598"/>
    <lineage>
        <taxon>Bacteria</taxon>
        <taxon>Pseudomonadati</taxon>
        <taxon>Pseudomonadota</taxon>
        <taxon>Betaproteobacteria</taxon>
        <taxon>Neisseriales</taxon>
        <taxon>Aquaspirillaceae</taxon>
        <taxon>Laribacter</taxon>
    </lineage>
</organism>